<comment type="function">
    <text evidence="1">Part of the high-affinity ATP-driven potassium transport (or Kdp) system, which catalyzes the hydrolysis of ATP coupled with the electrogenic transport of potassium into the cytoplasm. This subunit is responsible for energy coupling to the transport system and for the release of the potassium ions to the cytoplasm.</text>
</comment>
<comment type="catalytic activity">
    <reaction evidence="1">
        <text>K(+)(out) + ATP + H2O = K(+)(in) + ADP + phosphate + H(+)</text>
        <dbReference type="Rhea" id="RHEA:16777"/>
        <dbReference type="ChEBI" id="CHEBI:15377"/>
        <dbReference type="ChEBI" id="CHEBI:15378"/>
        <dbReference type="ChEBI" id="CHEBI:29103"/>
        <dbReference type="ChEBI" id="CHEBI:30616"/>
        <dbReference type="ChEBI" id="CHEBI:43474"/>
        <dbReference type="ChEBI" id="CHEBI:456216"/>
        <dbReference type="EC" id="7.2.2.6"/>
    </reaction>
    <physiologicalReaction direction="left-to-right" evidence="1">
        <dbReference type="Rhea" id="RHEA:16778"/>
    </physiologicalReaction>
</comment>
<comment type="subunit">
    <text evidence="1">The system is composed of three essential subunits: KdpA, KdpB and KdpC.</text>
</comment>
<comment type="subcellular location">
    <subcellularLocation>
        <location evidence="1">Cell inner membrane</location>
        <topology evidence="1">Multi-pass membrane protein</topology>
    </subcellularLocation>
</comment>
<comment type="similarity">
    <text evidence="1">Belongs to the cation transport ATPase (P-type) (TC 3.A.3) family. Type IA subfamily.</text>
</comment>
<feature type="chain" id="PRO_0000046149" description="Potassium-transporting ATPase ATP-binding subunit">
    <location>
        <begin position="1"/>
        <end position="682"/>
    </location>
</feature>
<feature type="transmembrane region" description="Helical" evidence="1">
    <location>
        <begin position="44"/>
        <end position="64"/>
    </location>
</feature>
<feature type="transmembrane region" description="Helical" evidence="1">
    <location>
        <begin position="66"/>
        <end position="86"/>
    </location>
</feature>
<feature type="transmembrane region" description="Helical" evidence="1">
    <location>
        <begin position="233"/>
        <end position="253"/>
    </location>
</feature>
<feature type="transmembrane region" description="Helical" evidence="1">
    <location>
        <begin position="257"/>
        <end position="277"/>
    </location>
</feature>
<feature type="transmembrane region" description="Helical" evidence="1">
    <location>
        <begin position="588"/>
        <end position="608"/>
    </location>
</feature>
<feature type="transmembrane region" description="Helical" evidence="1">
    <location>
        <begin position="616"/>
        <end position="636"/>
    </location>
</feature>
<feature type="transmembrane region" description="Helical" evidence="1">
    <location>
        <begin position="658"/>
        <end position="678"/>
    </location>
</feature>
<feature type="active site" description="4-aspartylphosphate intermediate" evidence="1">
    <location>
        <position position="310"/>
    </location>
</feature>
<feature type="binding site" evidence="1">
    <location>
        <position position="347"/>
    </location>
    <ligand>
        <name>ATP</name>
        <dbReference type="ChEBI" id="CHEBI:30616"/>
    </ligand>
</feature>
<feature type="binding site" evidence="1">
    <location>
        <position position="351"/>
    </location>
    <ligand>
        <name>ATP</name>
        <dbReference type="ChEBI" id="CHEBI:30616"/>
    </ligand>
</feature>
<feature type="binding site" evidence="1">
    <location>
        <begin position="377"/>
        <end position="384"/>
    </location>
    <ligand>
        <name>ATP</name>
        <dbReference type="ChEBI" id="CHEBI:30616"/>
    </ligand>
</feature>
<feature type="binding site" evidence="1">
    <location>
        <position position="395"/>
    </location>
    <ligand>
        <name>ATP</name>
        <dbReference type="ChEBI" id="CHEBI:30616"/>
    </ligand>
</feature>
<feature type="binding site" evidence="1">
    <location>
        <position position="518"/>
    </location>
    <ligand>
        <name>Mg(2+)</name>
        <dbReference type="ChEBI" id="CHEBI:18420"/>
    </ligand>
</feature>
<feature type="binding site" evidence="1">
    <location>
        <position position="522"/>
    </location>
    <ligand>
        <name>Mg(2+)</name>
        <dbReference type="ChEBI" id="CHEBI:18420"/>
    </ligand>
</feature>
<name>KDPB_XANCP</name>
<evidence type="ECO:0000255" key="1">
    <source>
        <dbReference type="HAMAP-Rule" id="MF_00285"/>
    </source>
</evidence>
<sequence>MSTIPVIEKRERADAKLFDGAVLLAAMRAAFLKLTPRHLLRSPVMAVVMGGTLLAAVITASGHGNAGFGWAVTAILFVTVLFGNFAEAIAEARGRGQAASLRRARKDLVARRVETALGGRETRVPAAELRPGDFVLVSEGEFVPADGEIVRGLATINEAAVTGESAPVLREAGTDRSGVIGGTRVLSDEIVFKVTAEPGQSFLDRMIALVEGANRQKTPNEIALTLLLAAMTLTFLIVVASLPAIAGFVGVTLDPLLLIALLVCLIPTTIGGLLPAIGIAGMNRAMSANVLAKSGKAVEVAGDVDVLLLDKTGTITYGDRQATVFHPLAGIDRAQLRDAAMLASLADPTPEGKSIVKLARQQGAVAVEPEDAHFIAFTAQTRMSGVDLAGRNIRKGAGDAIVAYVQAQGATVSPELNGRIEEVARGGATPLVVAEGRHVLGVVELSDVVKQGIKEKFAQLRAMGIKTVMITGDNPLTAAAIAAEAGVDDYIAQARPEDKLARIRAEQAGGRLVAMVGDGTNDAPALAQADVGLAMNSGTQAAKEAGNMVDLDSDPAKLLAVVEVGKQQLITRGALTTFSLANDVSKYFAILPALFAAAIPSMAALNVMHLSSPRHAVLAALIFNALIIPALIPLALRGVRFRPSSATALLRRNMLIYGLGGVLLPFAAIKLIDLALVATLGA</sequence>
<gene>
    <name evidence="1" type="primary">kdpB</name>
    <name type="ordered locus">XCC0703</name>
</gene>
<organism>
    <name type="scientific">Xanthomonas campestris pv. campestris (strain ATCC 33913 / DSM 3586 / NCPPB 528 / LMG 568 / P 25)</name>
    <dbReference type="NCBI Taxonomy" id="190485"/>
    <lineage>
        <taxon>Bacteria</taxon>
        <taxon>Pseudomonadati</taxon>
        <taxon>Pseudomonadota</taxon>
        <taxon>Gammaproteobacteria</taxon>
        <taxon>Lysobacterales</taxon>
        <taxon>Lysobacteraceae</taxon>
        <taxon>Xanthomonas</taxon>
    </lineage>
</organism>
<proteinExistence type="inferred from homology"/>
<keyword id="KW-0067">ATP-binding</keyword>
<keyword id="KW-0997">Cell inner membrane</keyword>
<keyword id="KW-1003">Cell membrane</keyword>
<keyword id="KW-0406">Ion transport</keyword>
<keyword id="KW-0460">Magnesium</keyword>
<keyword id="KW-0472">Membrane</keyword>
<keyword id="KW-0479">Metal-binding</keyword>
<keyword id="KW-0547">Nucleotide-binding</keyword>
<keyword id="KW-0597">Phosphoprotein</keyword>
<keyword id="KW-0630">Potassium</keyword>
<keyword id="KW-0633">Potassium transport</keyword>
<keyword id="KW-1185">Reference proteome</keyword>
<keyword id="KW-1278">Translocase</keyword>
<keyword id="KW-0812">Transmembrane</keyword>
<keyword id="KW-1133">Transmembrane helix</keyword>
<keyword id="KW-0813">Transport</keyword>
<accession>Q8PCM1</accession>
<dbReference type="EC" id="7.2.2.6" evidence="1"/>
<dbReference type="EMBL" id="AE008922">
    <property type="protein sequence ID" value="AAM40019.1"/>
    <property type="molecule type" value="Genomic_DNA"/>
</dbReference>
<dbReference type="RefSeq" id="NP_636095.1">
    <property type="nucleotide sequence ID" value="NC_003902.1"/>
</dbReference>
<dbReference type="RefSeq" id="WP_011035942.1">
    <property type="nucleotide sequence ID" value="NC_003902.1"/>
</dbReference>
<dbReference type="SMR" id="Q8PCM1"/>
<dbReference type="STRING" id="190485.XCC0703"/>
<dbReference type="EnsemblBacteria" id="AAM40019">
    <property type="protein sequence ID" value="AAM40019"/>
    <property type="gene ID" value="XCC0703"/>
</dbReference>
<dbReference type="KEGG" id="xcc:XCC0703"/>
<dbReference type="PATRIC" id="fig|190485.4.peg.768"/>
<dbReference type="eggNOG" id="COG2216">
    <property type="taxonomic scope" value="Bacteria"/>
</dbReference>
<dbReference type="HOGENOM" id="CLU_025728_2_0_6"/>
<dbReference type="OrthoDB" id="9814270at2"/>
<dbReference type="Proteomes" id="UP000001010">
    <property type="component" value="Chromosome"/>
</dbReference>
<dbReference type="GO" id="GO:0005886">
    <property type="term" value="C:plasma membrane"/>
    <property type="evidence" value="ECO:0000318"/>
    <property type="project" value="GO_Central"/>
</dbReference>
<dbReference type="GO" id="GO:0031004">
    <property type="term" value="C:potassium ion-transporting ATPase complex"/>
    <property type="evidence" value="ECO:0000318"/>
    <property type="project" value="GO_Central"/>
</dbReference>
<dbReference type="GO" id="GO:1903103">
    <property type="term" value="C:potassium:proton antiporter complex"/>
    <property type="evidence" value="ECO:0000318"/>
    <property type="project" value="GO_Central"/>
</dbReference>
<dbReference type="GO" id="GO:0005524">
    <property type="term" value="F:ATP binding"/>
    <property type="evidence" value="ECO:0007669"/>
    <property type="project" value="UniProtKB-UniRule"/>
</dbReference>
<dbReference type="GO" id="GO:0016887">
    <property type="term" value="F:ATP hydrolysis activity"/>
    <property type="evidence" value="ECO:0007669"/>
    <property type="project" value="InterPro"/>
</dbReference>
<dbReference type="GO" id="GO:0000287">
    <property type="term" value="F:magnesium ion binding"/>
    <property type="evidence" value="ECO:0007669"/>
    <property type="project" value="UniProtKB-UniRule"/>
</dbReference>
<dbReference type="GO" id="GO:0008556">
    <property type="term" value="F:P-type potassium transmembrane transporter activity"/>
    <property type="evidence" value="ECO:0000318"/>
    <property type="project" value="GO_Central"/>
</dbReference>
<dbReference type="GO" id="GO:0071805">
    <property type="term" value="P:potassium ion transmembrane transport"/>
    <property type="evidence" value="ECO:0000318"/>
    <property type="project" value="GO_Central"/>
</dbReference>
<dbReference type="FunFam" id="2.70.150.10:FF:000010">
    <property type="entry name" value="Potassium-transporting ATPase ATP-binding subunit"/>
    <property type="match status" value="1"/>
</dbReference>
<dbReference type="FunFam" id="3.40.1110.10:FF:000007">
    <property type="entry name" value="Potassium-transporting ATPase ATP-binding subunit"/>
    <property type="match status" value="1"/>
</dbReference>
<dbReference type="Gene3D" id="3.40.1110.10">
    <property type="entry name" value="Calcium-transporting ATPase, cytoplasmic domain N"/>
    <property type="match status" value="1"/>
</dbReference>
<dbReference type="Gene3D" id="2.70.150.10">
    <property type="entry name" value="Calcium-transporting ATPase, cytoplasmic transduction domain A"/>
    <property type="match status" value="1"/>
</dbReference>
<dbReference type="Gene3D" id="3.40.50.1000">
    <property type="entry name" value="HAD superfamily/HAD-like"/>
    <property type="match status" value="1"/>
</dbReference>
<dbReference type="HAMAP" id="MF_00285">
    <property type="entry name" value="KdpB"/>
    <property type="match status" value="1"/>
</dbReference>
<dbReference type="InterPro" id="IPR023299">
    <property type="entry name" value="ATPase_P-typ_cyto_dom_N"/>
</dbReference>
<dbReference type="InterPro" id="IPR018303">
    <property type="entry name" value="ATPase_P-typ_P_site"/>
</dbReference>
<dbReference type="InterPro" id="IPR023298">
    <property type="entry name" value="ATPase_P-typ_TM_dom_sf"/>
</dbReference>
<dbReference type="InterPro" id="IPR008250">
    <property type="entry name" value="ATPase_P-typ_transduc_dom_A_sf"/>
</dbReference>
<dbReference type="InterPro" id="IPR036412">
    <property type="entry name" value="HAD-like_sf"/>
</dbReference>
<dbReference type="InterPro" id="IPR023214">
    <property type="entry name" value="HAD_sf"/>
</dbReference>
<dbReference type="InterPro" id="IPR006391">
    <property type="entry name" value="P-type_ATPase_bsu_IA"/>
</dbReference>
<dbReference type="InterPro" id="IPR001757">
    <property type="entry name" value="P_typ_ATPase"/>
</dbReference>
<dbReference type="InterPro" id="IPR044492">
    <property type="entry name" value="P_typ_ATPase_HD_dom"/>
</dbReference>
<dbReference type="NCBIfam" id="TIGR01494">
    <property type="entry name" value="ATPase_P-type"/>
    <property type="match status" value="2"/>
</dbReference>
<dbReference type="NCBIfam" id="TIGR01497">
    <property type="entry name" value="kdpB"/>
    <property type="match status" value="1"/>
</dbReference>
<dbReference type="PANTHER" id="PTHR43743">
    <property type="entry name" value="POTASSIUM-TRANSPORTING ATPASE ATP-BINDING SUBUNIT"/>
    <property type="match status" value="1"/>
</dbReference>
<dbReference type="PANTHER" id="PTHR43743:SF1">
    <property type="entry name" value="POTASSIUM-TRANSPORTING ATPASE ATP-BINDING SUBUNIT"/>
    <property type="match status" value="1"/>
</dbReference>
<dbReference type="Pfam" id="PF00122">
    <property type="entry name" value="E1-E2_ATPase"/>
    <property type="match status" value="1"/>
</dbReference>
<dbReference type="Pfam" id="PF00702">
    <property type="entry name" value="Hydrolase"/>
    <property type="match status" value="1"/>
</dbReference>
<dbReference type="PRINTS" id="PR00119">
    <property type="entry name" value="CATATPASE"/>
</dbReference>
<dbReference type="SFLD" id="SFLDG00002">
    <property type="entry name" value="C1.7:_P-type_atpase_like"/>
    <property type="match status" value="1"/>
</dbReference>
<dbReference type="SFLD" id="SFLDF00027">
    <property type="entry name" value="p-type_atpase"/>
    <property type="match status" value="1"/>
</dbReference>
<dbReference type="SUPFAM" id="SSF81653">
    <property type="entry name" value="Calcium ATPase, transduction domain A"/>
    <property type="match status" value="1"/>
</dbReference>
<dbReference type="SUPFAM" id="SSF81665">
    <property type="entry name" value="Calcium ATPase, transmembrane domain M"/>
    <property type="match status" value="1"/>
</dbReference>
<dbReference type="SUPFAM" id="SSF56784">
    <property type="entry name" value="HAD-like"/>
    <property type="match status" value="1"/>
</dbReference>
<dbReference type="PROSITE" id="PS00154">
    <property type="entry name" value="ATPASE_E1_E2"/>
    <property type="match status" value="1"/>
</dbReference>
<reference key="1">
    <citation type="journal article" date="2002" name="Nature">
        <title>Comparison of the genomes of two Xanthomonas pathogens with differing host specificities.</title>
        <authorList>
            <person name="da Silva A.C.R."/>
            <person name="Ferro J.A."/>
            <person name="Reinach F.C."/>
            <person name="Farah C.S."/>
            <person name="Furlan L.R."/>
            <person name="Quaggio R.B."/>
            <person name="Monteiro-Vitorello C.B."/>
            <person name="Van Sluys M.A."/>
            <person name="Almeida N.F. Jr."/>
            <person name="Alves L.M.C."/>
            <person name="do Amaral A.M."/>
            <person name="Bertolini M.C."/>
            <person name="Camargo L.E.A."/>
            <person name="Camarotte G."/>
            <person name="Cannavan F."/>
            <person name="Cardozo J."/>
            <person name="Chambergo F."/>
            <person name="Ciapina L.P."/>
            <person name="Cicarelli R.M.B."/>
            <person name="Coutinho L.L."/>
            <person name="Cursino-Santos J.R."/>
            <person name="El-Dorry H."/>
            <person name="Faria J.B."/>
            <person name="Ferreira A.J.S."/>
            <person name="Ferreira R.C.C."/>
            <person name="Ferro M.I.T."/>
            <person name="Formighieri E.F."/>
            <person name="Franco M.C."/>
            <person name="Greggio C.C."/>
            <person name="Gruber A."/>
            <person name="Katsuyama A.M."/>
            <person name="Kishi L.T."/>
            <person name="Leite R.P."/>
            <person name="Lemos E.G.M."/>
            <person name="Lemos M.V.F."/>
            <person name="Locali E.C."/>
            <person name="Machado M.A."/>
            <person name="Madeira A.M.B.N."/>
            <person name="Martinez-Rossi N.M."/>
            <person name="Martins E.C."/>
            <person name="Meidanis J."/>
            <person name="Menck C.F.M."/>
            <person name="Miyaki C.Y."/>
            <person name="Moon D.H."/>
            <person name="Moreira L.M."/>
            <person name="Novo M.T.M."/>
            <person name="Okura V.K."/>
            <person name="Oliveira M.C."/>
            <person name="Oliveira V.R."/>
            <person name="Pereira H.A."/>
            <person name="Rossi A."/>
            <person name="Sena J.A.D."/>
            <person name="Silva C."/>
            <person name="de Souza R.F."/>
            <person name="Spinola L.A.F."/>
            <person name="Takita M.A."/>
            <person name="Tamura R.E."/>
            <person name="Teixeira E.C."/>
            <person name="Tezza R.I.D."/>
            <person name="Trindade dos Santos M."/>
            <person name="Truffi D."/>
            <person name="Tsai S.M."/>
            <person name="White F.F."/>
            <person name="Setubal J.C."/>
            <person name="Kitajima J.P."/>
        </authorList>
    </citation>
    <scope>NUCLEOTIDE SEQUENCE [LARGE SCALE GENOMIC DNA]</scope>
    <source>
        <strain>ATCC 33913 / DSM 3586 / NCPPB 528 / LMG 568 / P 25</strain>
    </source>
</reference>
<protein>
    <recommendedName>
        <fullName evidence="1">Potassium-transporting ATPase ATP-binding subunit</fullName>
        <ecNumber evidence="1">7.2.2.6</ecNumber>
    </recommendedName>
    <alternativeName>
        <fullName evidence="1">ATP phosphohydrolase [potassium-transporting] B chain</fullName>
    </alternativeName>
    <alternativeName>
        <fullName evidence="1">Potassium-binding and translocating subunit B</fullName>
    </alternativeName>
    <alternativeName>
        <fullName evidence="1">Potassium-translocating ATPase B chain</fullName>
    </alternativeName>
</protein>